<reference key="1">
    <citation type="submission" date="2007-11" db="EMBL/GenBank/DDBJ databases">
        <authorList>
            <consortium name="The Salmonella enterica serovar Paratyphi B Genome Sequencing Project"/>
            <person name="McClelland M."/>
            <person name="Sanderson E.K."/>
            <person name="Porwollik S."/>
            <person name="Spieth J."/>
            <person name="Clifton W.S."/>
            <person name="Fulton R."/>
            <person name="Cordes M."/>
            <person name="Wollam A."/>
            <person name="Shah N."/>
            <person name="Pepin K."/>
            <person name="Bhonagiri V."/>
            <person name="Nash W."/>
            <person name="Johnson M."/>
            <person name="Thiruvilangam P."/>
            <person name="Wilson R."/>
        </authorList>
    </citation>
    <scope>NUCLEOTIDE SEQUENCE [LARGE SCALE GENOMIC DNA]</scope>
    <source>
        <strain>ATCC BAA-1250 / SPB7</strain>
    </source>
</reference>
<gene>
    <name evidence="1" type="primary">secB</name>
    <name type="ordered locus">SPAB_04598</name>
</gene>
<dbReference type="EMBL" id="CP000886">
    <property type="protein sequence ID" value="ABX69911.1"/>
    <property type="molecule type" value="Genomic_DNA"/>
</dbReference>
<dbReference type="RefSeq" id="WP_000003370.1">
    <property type="nucleotide sequence ID" value="NC_010102.1"/>
</dbReference>
<dbReference type="SMR" id="A9MVK3"/>
<dbReference type="KEGG" id="spq:SPAB_04598"/>
<dbReference type="PATRIC" id="fig|1016998.12.peg.4324"/>
<dbReference type="HOGENOM" id="CLU_111574_1_0_6"/>
<dbReference type="BioCyc" id="SENT1016998:SPAB_RS18700-MONOMER"/>
<dbReference type="Proteomes" id="UP000008556">
    <property type="component" value="Chromosome"/>
</dbReference>
<dbReference type="GO" id="GO:0005737">
    <property type="term" value="C:cytoplasm"/>
    <property type="evidence" value="ECO:0007669"/>
    <property type="project" value="UniProtKB-SubCell"/>
</dbReference>
<dbReference type="GO" id="GO:0051082">
    <property type="term" value="F:unfolded protein binding"/>
    <property type="evidence" value="ECO:0007669"/>
    <property type="project" value="InterPro"/>
</dbReference>
<dbReference type="GO" id="GO:0006457">
    <property type="term" value="P:protein folding"/>
    <property type="evidence" value="ECO:0007669"/>
    <property type="project" value="UniProtKB-UniRule"/>
</dbReference>
<dbReference type="GO" id="GO:0051262">
    <property type="term" value="P:protein tetramerization"/>
    <property type="evidence" value="ECO:0007669"/>
    <property type="project" value="InterPro"/>
</dbReference>
<dbReference type="GO" id="GO:0015031">
    <property type="term" value="P:protein transport"/>
    <property type="evidence" value="ECO:0007669"/>
    <property type="project" value="UniProtKB-UniRule"/>
</dbReference>
<dbReference type="CDD" id="cd00557">
    <property type="entry name" value="Translocase_SecB"/>
    <property type="match status" value="1"/>
</dbReference>
<dbReference type="FunFam" id="3.10.420.10:FF:000001">
    <property type="entry name" value="Protein-export chaperone SecB"/>
    <property type="match status" value="1"/>
</dbReference>
<dbReference type="Gene3D" id="3.10.420.10">
    <property type="entry name" value="SecB-like"/>
    <property type="match status" value="1"/>
</dbReference>
<dbReference type="HAMAP" id="MF_00821">
    <property type="entry name" value="SecB"/>
    <property type="match status" value="1"/>
</dbReference>
<dbReference type="InterPro" id="IPR003708">
    <property type="entry name" value="SecB"/>
</dbReference>
<dbReference type="InterPro" id="IPR035958">
    <property type="entry name" value="SecB-like_sf"/>
</dbReference>
<dbReference type="NCBIfam" id="NF004390">
    <property type="entry name" value="PRK05751.1-1"/>
    <property type="match status" value="1"/>
</dbReference>
<dbReference type="NCBIfam" id="NF004393">
    <property type="entry name" value="PRK05751.1-4"/>
    <property type="match status" value="1"/>
</dbReference>
<dbReference type="NCBIfam" id="TIGR00809">
    <property type="entry name" value="secB"/>
    <property type="match status" value="1"/>
</dbReference>
<dbReference type="PANTHER" id="PTHR36918">
    <property type="match status" value="1"/>
</dbReference>
<dbReference type="PANTHER" id="PTHR36918:SF1">
    <property type="entry name" value="PROTEIN-EXPORT PROTEIN SECB"/>
    <property type="match status" value="1"/>
</dbReference>
<dbReference type="Pfam" id="PF02556">
    <property type="entry name" value="SecB"/>
    <property type="match status" value="1"/>
</dbReference>
<dbReference type="PRINTS" id="PR01594">
    <property type="entry name" value="SECBCHAPRONE"/>
</dbReference>
<dbReference type="SUPFAM" id="SSF54611">
    <property type="entry name" value="SecB-like"/>
    <property type="match status" value="1"/>
</dbReference>
<evidence type="ECO:0000255" key="1">
    <source>
        <dbReference type="HAMAP-Rule" id="MF_00821"/>
    </source>
</evidence>
<accession>A9MVK3</accession>
<organism>
    <name type="scientific">Salmonella paratyphi B (strain ATCC BAA-1250 / SPB7)</name>
    <dbReference type="NCBI Taxonomy" id="1016998"/>
    <lineage>
        <taxon>Bacteria</taxon>
        <taxon>Pseudomonadati</taxon>
        <taxon>Pseudomonadota</taxon>
        <taxon>Gammaproteobacteria</taxon>
        <taxon>Enterobacterales</taxon>
        <taxon>Enterobacteriaceae</taxon>
        <taxon>Salmonella</taxon>
    </lineage>
</organism>
<comment type="function">
    <text evidence="1">One of the proteins required for the normal export of preproteins out of the cell cytoplasm. It is a molecular chaperone that binds to a subset of precursor proteins, maintaining them in a translocation-competent state. It also specifically binds to its receptor SecA.</text>
</comment>
<comment type="subunit">
    <text evidence="1">Homotetramer, a dimer of dimers. One homotetramer interacts with 1 SecA dimer.</text>
</comment>
<comment type="subcellular location">
    <subcellularLocation>
        <location evidence="1">Cytoplasm</location>
    </subcellularLocation>
</comment>
<comment type="similarity">
    <text evidence="1">Belongs to the SecB family.</text>
</comment>
<sequence>MSEQNNTEMAFQIQRIYTKDVSFEAPNAPHVFQKDWQPEVKLDLDTASSQLADDVYEVVLRVTVTASLGEETAFLCEVQQAGIFSISGIEGTQMAHCLGAYCPNILFPYARECITSLVSRGTFPQLNLAPVNFDALFMNYLQQQAGEGTEEHQDA</sequence>
<keyword id="KW-0143">Chaperone</keyword>
<keyword id="KW-0963">Cytoplasm</keyword>
<keyword id="KW-0653">Protein transport</keyword>
<keyword id="KW-0811">Translocation</keyword>
<keyword id="KW-0813">Transport</keyword>
<name>SECB_SALPB</name>
<proteinExistence type="inferred from homology"/>
<feature type="chain" id="PRO_1000083865" description="Protein-export protein SecB">
    <location>
        <begin position="1"/>
        <end position="155"/>
    </location>
</feature>
<protein>
    <recommendedName>
        <fullName evidence="1">Protein-export protein SecB</fullName>
    </recommendedName>
</protein>